<name>M21D2_HUMAN</name>
<organism>
    <name type="scientific">Homo sapiens</name>
    <name type="common">Human</name>
    <dbReference type="NCBI Taxonomy" id="9606"/>
    <lineage>
        <taxon>Eukaryota</taxon>
        <taxon>Metazoa</taxon>
        <taxon>Chordata</taxon>
        <taxon>Craniata</taxon>
        <taxon>Vertebrata</taxon>
        <taxon>Euteleostomi</taxon>
        <taxon>Mammalia</taxon>
        <taxon>Eutheria</taxon>
        <taxon>Euarchontoglires</taxon>
        <taxon>Primates</taxon>
        <taxon>Haplorrhini</taxon>
        <taxon>Catarrhini</taxon>
        <taxon>Hominidae</taxon>
        <taxon>Homo</taxon>
    </lineage>
</organism>
<protein>
    <recommendedName>
        <fullName evidence="6">Nucleotidyltransferase MB21D2</fullName>
        <ecNumber evidence="2">2.7.7.-</ecNumber>
    </recommendedName>
    <alternativeName>
        <fullName evidence="6">Mab-21 domain-containing protein 2</fullName>
        <shortName evidence="5">hMB21D2</shortName>
    </alternativeName>
</protein>
<sequence length="491" mass="55800">MKMAAPTANKAASLGCNNKPAFPELDFRSGARVEELNKLIQEFTKHDQREYDDQRALEIHTAKDFIFSMLGMVQKLDQKLPVANEYLLLSGGVREGVVDLDLDELNVYARGTDYDMDFTLLVPALKLHDRNQPVTLDMRHSALCHSWLSLRLFDEGTISKWKDCCTIVDHINGATNYFFSPTKVADWFYDSISIVLSEIQKKPQRGMPKVEKVEKNGTIISIILGVGSSRMLYDIVPVVSFKGWPAVAQSWLMENHFWDGKITEEEVISGFYLVPACSYKGKKDNEWRLSFARSEVQLKKCISSSLMQAYQACKAIIIKLLSRPKAISPYHLRSMMLWACDRLPANYLAQEDYAAHFLLGLIDDLQHCLVNKMCPNYFIPQCNMLEHLSEETVMLHARKLSSVRSDPAEHLRTAIEHVKAANRLTLELQRRGSTTSIPSPQSDGGDPNQPDDRLAKKLQQLVTENPGKSISVFINPDDVTRPHFRIDDKFF</sequence>
<dbReference type="EC" id="2.7.7.-" evidence="2"/>
<dbReference type="EMBL" id="AC090025">
    <property type="status" value="NOT_ANNOTATED_CDS"/>
    <property type="molecule type" value="Genomic_DNA"/>
</dbReference>
<dbReference type="EMBL" id="AC117416">
    <property type="status" value="NOT_ANNOTATED_CDS"/>
    <property type="molecule type" value="Genomic_DNA"/>
</dbReference>
<dbReference type="EMBL" id="BC013123">
    <property type="protein sequence ID" value="AAH13123.1"/>
    <property type="status" value="ALT_INIT"/>
    <property type="molecule type" value="mRNA"/>
</dbReference>
<dbReference type="EMBL" id="BC036194">
    <property type="protein sequence ID" value="AAH36194.3"/>
    <property type="molecule type" value="mRNA"/>
</dbReference>
<dbReference type="EMBL" id="BC045582">
    <property type="protein sequence ID" value="AAH45582.1"/>
    <property type="status" value="ALT_INIT"/>
    <property type="molecule type" value="mRNA"/>
</dbReference>
<dbReference type="CCDS" id="CCDS3302.2"/>
<dbReference type="RefSeq" id="NP_848591.2">
    <property type="nucleotide sequence ID" value="NM_178496.4"/>
</dbReference>
<dbReference type="PDB" id="7LT1">
    <property type="method" value="X-ray"/>
    <property type="resolution" value="2.40 A"/>
    <property type="chains" value="A/B=29-491"/>
</dbReference>
<dbReference type="PDBsum" id="7LT1"/>
<dbReference type="SMR" id="Q8IYB1"/>
<dbReference type="BioGRID" id="127413">
    <property type="interactions" value="108"/>
</dbReference>
<dbReference type="FunCoup" id="Q8IYB1">
    <property type="interactions" value="537"/>
</dbReference>
<dbReference type="IntAct" id="Q8IYB1">
    <property type="interactions" value="49"/>
</dbReference>
<dbReference type="MINT" id="Q8IYB1"/>
<dbReference type="STRING" id="9606.ENSP00000376246"/>
<dbReference type="iPTMnet" id="Q8IYB1"/>
<dbReference type="PhosphoSitePlus" id="Q8IYB1"/>
<dbReference type="BioMuta" id="MB21D2"/>
<dbReference type="jPOST" id="Q8IYB1"/>
<dbReference type="MassIVE" id="Q8IYB1"/>
<dbReference type="PaxDb" id="9606-ENSP00000376246"/>
<dbReference type="PeptideAtlas" id="Q8IYB1"/>
<dbReference type="ProteomicsDB" id="71139"/>
<dbReference type="Pumba" id="Q8IYB1"/>
<dbReference type="Antibodypedia" id="46851">
    <property type="antibodies" value="37 antibodies from 12 providers"/>
</dbReference>
<dbReference type="DNASU" id="151963"/>
<dbReference type="Ensembl" id="ENST00000392452.3">
    <property type="protein sequence ID" value="ENSP00000376246.2"/>
    <property type="gene ID" value="ENSG00000180611.7"/>
</dbReference>
<dbReference type="GeneID" id="151963"/>
<dbReference type="KEGG" id="hsa:151963"/>
<dbReference type="MANE-Select" id="ENST00000392452.3">
    <property type="protein sequence ID" value="ENSP00000376246.2"/>
    <property type="RefSeq nucleotide sequence ID" value="NM_178496.4"/>
    <property type="RefSeq protein sequence ID" value="NP_848591.2"/>
</dbReference>
<dbReference type="UCSC" id="uc011bsp.3">
    <property type="organism name" value="human"/>
</dbReference>
<dbReference type="AGR" id="HGNC:30438"/>
<dbReference type="CTD" id="151963"/>
<dbReference type="DisGeNET" id="151963"/>
<dbReference type="GeneCards" id="MB21D2"/>
<dbReference type="HGNC" id="HGNC:30438">
    <property type="gene designation" value="MB21D2"/>
</dbReference>
<dbReference type="HPA" id="ENSG00000180611">
    <property type="expression patterns" value="Low tissue specificity"/>
</dbReference>
<dbReference type="MIM" id="620914">
    <property type="type" value="gene"/>
</dbReference>
<dbReference type="neXtProt" id="NX_Q8IYB1"/>
<dbReference type="OpenTargets" id="ENSG00000180611"/>
<dbReference type="PharmGKB" id="PA143485335"/>
<dbReference type="VEuPathDB" id="HostDB:ENSG00000180611"/>
<dbReference type="eggNOG" id="KOG3963">
    <property type="taxonomic scope" value="Eukaryota"/>
</dbReference>
<dbReference type="GeneTree" id="ENSGT01050000244976"/>
<dbReference type="HOGENOM" id="CLU_041150_1_0_1"/>
<dbReference type="InParanoid" id="Q8IYB1"/>
<dbReference type="OMA" id="FTRHDQR"/>
<dbReference type="OrthoDB" id="269173at2759"/>
<dbReference type="PAN-GO" id="Q8IYB1">
    <property type="GO annotations" value="0 GO annotations based on evolutionary models"/>
</dbReference>
<dbReference type="PhylomeDB" id="Q8IYB1"/>
<dbReference type="TreeFam" id="TF329089"/>
<dbReference type="PathwayCommons" id="Q8IYB1"/>
<dbReference type="SignaLink" id="Q8IYB1"/>
<dbReference type="BioGRID-ORCS" id="151963">
    <property type="hits" value="14 hits in 1150 CRISPR screens"/>
</dbReference>
<dbReference type="ChiTaRS" id="MB21D2">
    <property type="organism name" value="human"/>
</dbReference>
<dbReference type="GenomeRNAi" id="151963"/>
<dbReference type="Pharos" id="Q8IYB1">
    <property type="development level" value="Tdark"/>
</dbReference>
<dbReference type="PRO" id="PR:Q8IYB1"/>
<dbReference type="Proteomes" id="UP000005640">
    <property type="component" value="Chromosome 3"/>
</dbReference>
<dbReference type="RNAct" id="Q8IYB1">
    <property type="molecule type" value="protein"/>
</dbReference>
<dbReference type="Bgee" id="ENSG00000180611">
    <property type="expression patterns" value="Expressed in secondary oocyte and 186 other cell types or tissues"/>
</dbReference>
<dbReference type="GO" id="GO:0045296">
    <property type="term" value="F:cadherin binding"/>
    <property type="evidence" value="ECO:0007005"/>
    <property type="project" value="BHF-UCL"/>
</dbReference>
<dbReference type="GO" id="GO:0016779">
    <property type="term" value="F:nucleotidyltransferase activity"/>
    <property type="evidence" value="ECO:0007669"/>
    <property type="project" value="UniProtKB-KW"/>
</dbReference>
<dbReference type="GO" id="GO:0044877">
    <property type="term" value="F:protein-containing complex binding"/>
    <property type="evidence" value="ECO:0000314"/>
    <property type="project" value="MGI"/>
</dbReference>
<dbReference type="FunFam" id="1.10.1410.40:FF:000005">
    <property type="entry name" value="MB21D2 isoform 1"/>
    <property type="match status" value="1"/>
</dbReference>
<dbReference type="FunFam" id="3.30.460.90:FF:000003">
    <property type="entry name" value="MB21D2 isoform 1"/>
    <property type="match status" value="1"/>
</dbReference>
<dbReference type="Gene3D" id="1.10.1410.40">
    <property type="match status" value="1"/>
</dbReference>
<dbReference type="Gene3D" id="3.30.460.90">
    <property type="match status" value="1"/>
</dbReference>
<dbReference type="InterPro" id="IPR046903">
    <property type="entry name" value="Mab-21-like_nuc_Trfase"/>
</dbReference>
<dbReference type="InterPro" id="IPR046906">
    <property type="entry name" value="Mab-21_HhH/H2TH-like"/>
</dbReference>
<dbReference type="InterPro" id="IPR024810">
    <property type="entry name" value="MAB21L/cGLR"/>
</dbReference>
<dbReference type="PANTHER" id="PTHR10656">
    <property type="entry name" value="CELL FATE DETERMINING PROTEIN MAB21-RELATED"/>
    <property type="match status" value="1"/>
</dbReference>
<dbReference type="PANTHER" id="PTHR10656:SF47">
    <property type="entry name" value="NUCLEOTIDYLTRANSFERASE MB21D2"/>
    <property type="match status" value="1"/>
</dbReference>
<dbReference type="Pfam" id="PF03281">
    <property type="entry name" value="Mab-21"/>
    <property type="match status" value="1"/>
</dbReference>
<dbReference type="Pfam" id="PF20266">
    <property type="entry name" value="Mab-21_C"/>
    <property type="match status" value="1"/>
</dbReference>
<dbReference type="SMART" id="SM01265">
    <property type="entry name" value="Mab-21"/>
    <property type="match status" value="1"/>
</dbReference>
<gene>
    <name evidence="5 8" type="primary">MB21D2</name>
    <name type="synonym">C3orf59</name>
</gene>
<proteinExistence type="evidence at protein level"/>
<accession>Q8IYB1</accession>
<accession>Q86VD8</accession>
<keyword id="KW-0002">3D-structure</keyword>
<keyword id="KW-0903">Direct protein sequencing</keyword>
<keyword id="KW-0548">Nucleotidyltransferase</keyword>
<keyword id="KW-0597">Phosphoprotein</keyword>
<keyword id="KW-1267">Proteomics identification</keyword>
<keyword id="KW-1185">Reference proteome</keyword>
<keyword id="KW-0808">Transferase</keyword>
<reference key="1">
    <citation type="journal article" date="2006" name="Nature">
        <title>The DNA sequence, annotation and analysis of human chromosome 3.</title>
        <authorList>
            <person name="Muzny D.M."/>
            <person name="Scherer S.E."/>
            <person name="Kaul R."/>
            <person name="Wang J."/>
            <person name="Yu J."/>
            <person name="Sudbrak R."/>
            <person name="Buhay C.J."/>
            <person name="Chen R."/>
            <person name="Cree A."/>
            <person name="Ding Y."/>
            <person name="Dugan-Rocha S."/>
            <person name="Gill R."/>
            <person name="Gunaratne P."/>
            <person name="Harris R.A."/>
            <person name="Hawes A.C."/>
            <person name="Hernandez J."/>
            <person name="Hodgson A.V."/>
            <person name="Hume J."/>
            <person name="Jackson A."/>
            <person name="Khan Z.M."/>
            <person name="Kovar-Smith C."/>
            <person name="Lewis L.R."/>
            <person name="Lozado R.J."/>
            <person name="Metzker M.L."/>
            <person name="Milosavljevic A."/>
            <person name="Miner G.R."/>
            <person name="Morgan M.B."/>
            <person name="Nazareth L.V."/>
            <person name="Scott G."/>
            <person name="Sodergren E."/>
            <person name="Song X.-Z."/>
            <person name="Steffen D."/>
            <person name="Wei S."/>
            <person name="Wheeler D.A."/>
            <person name="Wright M.W."/>
            <person name="Worley K.C."/>
            <person name="Yuan Y."/>
            <person name="Zhang Z."/>
            <person name="Adams C.Q."/>
            <person name="Ansari-Lari M.A."/>
            <person name="Ayele M."/>
            <person name="Brown M.J."/>
            <person name="Chen G."/>
            <person name="Chen Z."/>
            <person name="Clendenning J."/>
            <person name="Clerc-Blankenburg K.P."/>
            <person name="Chen R."/>
            <person name="Chen Z."/>
            <person name="Davis C."/>
            <person name="Delgado O."/>
            <person name="Dinh H.H."/>
            <person name="Dong W."/>
            <person name="Draper H."/>
            <person name="Ernst S."/>
            <person name="Fu G."/>
            <person name="Gonzalez-Garay M.L."/>
            <person name="Garcia D.K."/>
            <person name="Gillett W."/>
            <person name="Gu J."/>
            <person name="Hao B."/>
            <person name="Haugen E."/>
            <person name="Havlak P."/>
            <person name="He X."/>
            <person name="Hennig S."/>
            <person name="Hu S."/>
            <person name="Huang W."/>
            <person name="Jackson L.R."/>
            <person name="Jacob L.S."/>
            <person name="Kelly S.H."/>
            <person name="Kube M."/>
            <person name="Levy R."/>
            <person name="Li Z."/>
            <person name="Liu B."/>
            <person name="Liu J."/>
            <person name="Liu W."/>
            <person name="Lu J."/>
            <person name="Maheshwari M."/>
            <person name="Nguyen B.-V."/>
            <person name="Okwuonu G.O."/>
            <person name="Palmeiri A."/>
            <person name="Pasternak S."/>
            <person name="Perez L.M."/>
            <person name="Phelps K.A."/>
            <person name="Plopper F.J."/>
            <person name="Qiang B."/>
            <person name="Raymond C."/>
            <person name="Rodriguez R."/>
            <person name="Saenphimmachak C."/>
            <person name="Santibanez J."/>
            <person name="Shen H."/>
            <person name="Shen Y."/>
            <person name="Subramanian S."/>
            <person name="Tabor P.E."/>
            <person name="Verduzco D."/>
            <person name="Waldron L."/>
            <person name="Wang J."/>
            <person name="Wang J."/>
            <person name="Wang Q."/>
            <person name="Williams G.A."/>
            <person name="Wong G.K.-S."/>
            <person name="Yao Z."/>
            <person name="Zhang J."/>
            <person name="Zhang X."/>
            <person name="Zhao G."/>
            <person name="Zhou J."/>
            <person name="Zhou Y."/>
            <person name="Nelson D."/>
            <person name="Lehrach H."/>
            <person name="Reinhardt R."/>
            <person name="Naylor S.L."/>
            <person name="Yang H."/>
            <person name="Olson M."/>
            <person name="Weinstock G."/>
            <person name="Gibbs R.A."/>
        </authorList>
    </citation>
    <scope>NUCLEOTIDE SEQUENCE [LARGE SCALE GENOMIC DNA]</scope>
</reference>
<reference key="2">
    <citation type="journal article" date="2004" name="Genome Res.">
        <title>The status, quality, and expansion of the NIH full-length cDNA project: the Mammalian Gene Collection (MGC).</title>
        <authorList>
            <consortium name="The MGC Project Team"/>
        </authorList>
    </citation>
    <scope>NUCLEOTIDE SEQUENCE [LARGE SCALE MRNA]</scope>
    <source>
        <tissue>Hippocampus</tissue>
        <tissue>Liver</tissue>
        <tissue>Testis</tissue>
    </source>
</reference>
<reference key="3">
    <citation type="submission" date="2008-02" db="UniProtKB">
        <authorList>
            <person name="Bienvenut W.V."/>
            <person name="Dhillon A.S."/>
            <person name="Kolch W."/>
        </authorList>
    </citation>
    <scope>PROTEIN SEQUENCE OF 76-126; 231-242; 326-333; 424-430 AND 457-468</scope>
    <scope>IDENTIFICATION BY MASS SPECTROMETRY</scope>
    <source>
        <tissue>Hepatoma</tissue>
    </source>
</reference>
<reference key="4">
    <citation type="journal article" date="2014" name="J. Proteomics">
        <title>An enzyme assisted RP-RPLC approach for in-depth analysis of human liver phosphoproteome.</title>
        <authorList>
            <person name="Bian Y."/>
            <person name="Song C."/>
            <person name="Cheng K."/>
            <person name="Dong M."/>
            <person name="Wang F."/>
            <person name="Huang J."/>
            <person name="Sun D."/>
            <person name="Wang L."/>
            <person name="Ye M."/>
            <person name="Zou H."/>
        </authorList>
    </citation>
    <scope>IDENTIFICATION BY MASS SPECTROMETRY [LARGE SCALE ANALYSIS]</scope>
    <source>
        <tissue>Liver</tissue>
    </source>
</reference>
<reference key="5">
    <citation type="journal article" date="2021" name="Nature">
        <title>cGAS-like receptors sense RNA and control 3'2'-cGAMP signaling in Drosophila.</title>
        <authorList>
            <person name="Slavik K.M."/>
            <person name="Morehouse B.R."/>
            <person name="Ragucci A.E."/>
            <person name="Zhou W."/>
            <person name="Ai X."/>
            <person name="Chen Y."/>
            <person name="Li L."/>
            <person name="Wei Z."/>
            <person name="Baehre H."/>
            <person name="Koenig M."/>
            <person name="Seifert R."/>
            <person name="Lee A.S.Y."/>
            <person name="Cai H."/>
            <person name="Imler J.L."/>
            <person name="Kranzusch P.J."/>
        </authorList>
    </citation>
    <scope>X-RAY CRYSTALLOGRAPHY (2.4 ANGSTROMS) OF 29-491</scope>
</reference>
<reference key="6">
    <citation type="journal article" date="2020" name="Mol. Oncol.">
        <title>Overexpression of wild type or a Q311E mutant MB21D2 promotes a pro-oncogenic phenotype in HNSCC.</title>
        <authorList>
            <person name="Gracilla D.E."/>
            <person name="Korla P.K."/>
            <person name="Lai M.T."/>
            <person name="Chiang A.J."/>
            <person name="Liou W.S."/>
            <person name="Sheu J.J."/>
        </authorList>
    </citation>
    <scope>VARIANT GLU-311</scope>
</reference>
<feature type="chain" id="PRO_0000239303" description="Nucleotidyltransferase MB21D2">
    <location>
        <begin position="1"/>
        <end position="491"/>
    </location>
</feature>
<feature type="region of interest" description="Disordered" evidence="3">
    <location>
        <begin position="431"/>
        <end position="452"/>
    </location>
</feature>
<feature type="compositionally biased region" description="Polar residues" evidence="3">
    <location>
        <begin position="431"/>
        <end position="442"/>
    </location>
</feature>
<feature type="modified residue" description="Phosphothreonine" evidence="1">
    <location>
        <position position="435"/>
    </location>
</feature>
<feature type="modified residue" description="Phosphoserine" evidence="1">
    <location>
        <position position="436"/>
    </location>
</feature>
<feature type="modified residue" description="Phosphoserine" evidence="1">
    <location>
        <position position="439"/>
    </location>
</feature>
<feature type="modified residue" description="Phosphoserine" evidence="1">
    <location>
        <position position="442"/>
    </location>
</feature>
<feature type="sequence variant" id="VAR_085526" description="Found in patients with squamous cell carcinomas; oncogenic; dbSNP:rs988241015." evidence="4">
    <original>Q</original>
    <variation>E</variation>
    <location>
        <position position="311"/>
    </location>
</feature>
<feature type="helix" evidence="9">
    <location>
        <begin position="29"/>
        <end position="47"/>
    </location>
</feature>
<feature type="helix" evidence="9">
    <location>
        <begin position="53"/>
        <end position="76"/>
    </location>
</feature>
<feature type="strand" evidence="9">
    <location>
        <begin position="87"/>
        <end position="91"/>
    </location>
</feature>
<feature type="helix" evidence="9">
    <location>
        <begin position="93"/>
        <end position="95"/>
    </location>
</feature>
<feature type="strand" evidence="9">
    <location>
        <begin position="97"/>
        <end position="99"/>
    </location>
</feature>
<feature type="turn" evidence="9">
    <location>
        <begin position="111"/>
        <end position="113"/>
    </location>
</feature>
<feature type="strand" evidence="9">
    <location>
        <begin position="114"/>
        <end position="127"/>
    </location>
</feature>
<feature type="helix" evidence="9">
    <location>
        <begin position="129"/>
        <end position="131"/>
    </location>
</feature>
<feature type="helix" evidence="9">
    <location>
        <begin position="132"/>
        <end position="135"/>
    </location>
</feature>
<feature type="strand" evidence="9">
    <location>
        <begin position="145"/>
        <end position="149"/>
    </location>
</feature>
<feature type="helix" evidence="9">
    <location>
        <begin position="155"/>
        <end position="160"/>
    </location>
</feature>
<feature type="helix" evidence="9">
    <location>
        <begin position="162"/>
        <end position="164"/>
    </location>
</feature>
<feature type="strand" evidence="9">
    <location>
        <begin position="165"/>
        <end position="168"/>
    </location>
</feature>
<feature type="strand" evidence="9">
    <location>
        <begin position="171"/>
        <end position="173"/>
    </location>
</feature>
<feature type="strand" evidence="9">
    <location>
        <begin position="176"/>
        <end position="179"/>
    </location>
</feature>
<feature type="helix" evidence="9">
    <location>
        <begin position="181"/>
        <end position="201"/>
    </location>
</feature>
<feature type="strand" evidence="9">
    <location>
        <begin position="209"/>
        <end position="216"/>
    </location>
</feature>
<feature type="strand" evidence="9">
    <location>
        <begin position="219"/>
        <end position="226"/>
    </location>
</feature>
<feature type="strand" evidence="9">
    <location>
        <begin position="229"/>
        <end position="243"/>
    </location>
</feature>
<feature type="helix" evidence="9">
    <location>
        <begin position="246"/>
        <end position="252"/>
    </location>
</feature>
<feature type="helix" evidence="9">
    <location>
        <begin position="264"/>
        <end position="267"/>
    </location>
</feature>
<feature type="strand" evidence="9">
    <location>
        <begin position="268"/>
        <end position="275"/>
    </location>
</feature>
<feature type="strand" evidence="9">
    <location>
        <begin position="279"/>
        <end position="281"/>
    </location>
</feature>
<feature type="turn" evidence="9">
    <location>
        <begin position="283"/>
        <end position="285"/>
    </location>
</feature>
<feature type="strand" evidence="9">
    <location>
        <begin position="287"/>
        <end position="290"/>
    </location>
</feature>
<feature type="helix" evidence="9">
    <location>
        <begin position="292"/>
        <end position="298"/>
    </location>
</feature>
<feature type="turn" evidence="9">
    <location>
        <begin position="299"/>
        <end position="301"/>
    </location>
</feature>
<feature type="helix" evidence="9">
    <location>
        <begin position="304"/>
        <end position="320"/>
    </location>
</feature>
<feature type="strand" evidence="9">
    <location>
        <begin position="323"/>
        <end position="325"/>
    </location>
</feature>
<feature type="helix" evidence="9">
    <location>
        <begin position="329"/>
        <end position="341"/>
    </location>
</feature>
<feature type="helix" evidence="9">
    <location>
        <begin position="345"/>
        <end position="349"/>
    </location>
</feature>
<feature type="helix" evidence="9">
    <location>
        <begin position="351"/>
        <end position="353"/>
    </location>
</feature>
<feature type="helix" evidence="9">
    <location>
        <begin position="354"/>
        <end position="370"/>
    </location>
</feature>
<feature type="strand" evidence="9">
    <location>
        <begin position="377"/>
        <end position="379"/>
    </location>
</feature>
<feature type="turn" evidence="9">
    <location>
        <begin position="384"/>
        <end position="387"/>
    </location>
</feature>
<feature type="helix" evidence="9">
    <location>
        <begin position="390"/>
        <end position="405"/>
    </location>
</feature>
<feature type="helix" evidence="9">
    <location>
        <begin position="407"/>
        <end position="429"/>
    </location>
</feature>
<evidence type="ECO:0000250" key="1">
    <source>
        <dbReference type="UniProtKB" id="Q8C525"/>
    </source>
</evidence>
<evidence type="ECO:0000250" key="2">
    <source>
        <dbReference type="UniProtKB" id="Q8N884"/>
    </source>
</evidence>
<evidence type="ECO:0000256" key="3">
    <source>
        <dbReference type="SAM" id="MobiDB-lite"/>
    </source>
</evidence>
<evidence type="ECO:0000269" key="4">
    <source>
    </source>
</evidence>
<evidence type="ECO:0000303" key="5">
    <source>
    </source>
</evidence>
<evidence type="ECO:0000305" key="6"/>
<evidence type="ECO:0000305" key="7">
    <source>
    </source>
</evidence>
<evidence type="ECO:0000312" key="8">
    <source>
        <dbReference type="HGNC" id="HGNC:30438"/>
    </source>
</evidence>
<evidence type="ECO:0007829" key="9">
    <source>
        <dbReference type="PDB" id="7LT1"/>
    </source>
</evidence>
<comment type="function">
    <text evidence="7">Probable nucleotidyltransferase that catalyzes the formation of cyclic dinucleotide second messenger in response to some unknown stimulus.</text>
</comment>
<comment type="interaction">
    <interactant intactId="EBI-11323212">
        <id>Q8IYB1</id>
    </interactant>
    <interactant intactId="EBI-602199">
        <id>Q12774</id>
        <label>ARHGEF5</label>
    </interactant>
    <organismsDiffer>false</organismsDiffer>
    <experiments>3</experiments>
</comment>
<comment type="interaction">
    <interactant intactId="EBI-11323212">
        <id>Q8IYB1</id>
    </interactant>
    <interactant intactId="EBI-358049">
        <id>Q13895</id>
        <label>BYSL</label>
    </interactant>
    <organismsDiffer>false</organismsDiffer>
    <experiments>3</experiments>
</comment>
<comment type="interaction">
    <interactant intactId="EBI-11323212">
        <id>Q8IYB1</id>
    </interactant>
    <interactant intactId="EBI-712912">
        <id>Q9HC52</id>
        <label>CBX8</label>
    </interactant>
    <organismsDiffer>false</organismsDiffer>
    <experiments>3</experiments>
</comment>
<comment type="interaction">
    <interactant intactId="EBI-11323212">
        <id>Q8IYB1</id>
    </interactant>
    <interactant intactId="EBI-12034850">
        <id>Q86X95-2</id>
        <label>CIR1</label>
    </interactant>
    <organismsDiffer>false</organismsDiffer>
    <experiments>3</experiments>
</comment>
<comment type="interaction">
    <interactant intactId="EBI-11323212">
        <id>Q8IYB1</id>
    </interactant>
    <interactant intactId="EBI-11984733">
        <id>O60941-5</id>
        <label>DTNB</label>
    </interactant>
    <organismsDiffer>false</organismsDiffer>
    <experiments>3</experiments>
</comment>
<comment type="interaction">
    <interactant intactId="EBI-11323212">
        <id>Q8IYB1</id>
    </interactant>
    <interactant intactId="EBI-852291">
        <id>O60447</id>
        <label>EVI5</label>
    </interactant>
    <organismsDiffer>false</organismsDiffer>
    <experiments>4</experiments>
</comment>
<comment type="interaction">
    <interactant intactId="EBI-11323212">
        <id>Q8IYB1</id>
    </interactant>
    <interactant intactId="EBI-9675802">
        <id>Q6PF18</id>
        <label>MORN3</label>
    </interactant>
    <organismsDiffer>false</organismsDiffer>
    <experiments>3</experiments>
</comment>
<comment type="interaction">
    <interactant intactId="EBI-11323212">
        <id>Q8IYB1</id>
    </interactant>
    <interactant intactId="EBI-11984839">
        <id>Q96QF0-7</id>
        <label>RAB3IP</label>
    </interactant>
    <organismsDiffer>false</organismsDiffer>
    <experiments>3</experiments>
</comment>
<comment type="interaction">
    <interactant intactId="EBI-11323212">
        <id>Q8IYB1</id>
    </interactant>
    <interactant intactId="EBI-10829018">
        <id>Q04864-2</id>
        <label>REL</label>
    </interactant>
    <organismsDiffer>false</organismsDiffer>
    <experiments>3</experiments>
</comment>
<comment type="interaction">
    <interactant intactId="EBI-11323212">
        <id>Q8IYB1</id>
    </interactant>
    <interactant intactId="EBI-7244836">
        <id>Q9UP95</id>
        <label>SLC12A4</label>
    </interactant>
    <organismsDiffer>false</organismsDiffer>
    <experiments>3</experiments>
</comment>
<comment type="interaction">
    <interactant intactId="EBI-11323212">
        <id>Q8IYB1</id>
    </interactant>
    <interactant intactId="EBI-3866665">
        <id>O43609</id>
        <label>SPRY1</label>
    </interactant>
    <organismsDiffer>false</organismsDiffer>
    <experiments>3</experiments>
</comment>
<comment type="interaction">
    <interactant intactId="EBI-11323212">
        <id>Q8IYB1</id>
    </interactant>
    <interactant intactId="EBI-9088990">
        <id>Q7Z783</id>
    </interactant>
    <organismsDiffer>false</organismsDiffer>
    <experiments>6</experiments>
</comment>
<comment type="similarity">
    <text evidence="6">Belongs to the mab-21 family.</text>
</comment>
<comment type="sequence caution" evidence="6">
    <conflict type="erroneous initiation">
        <sequence resource="EMBL-CDS" id="AAH13123"/>
    </conflict>
    <text>Truncated N-terminus.</text>
</comment>
<comment type="sequence caution" evidence="6">
    <conflict type="erroneous initiation">
        <sequence resource="EMBL-CDS" id="AAH45582"/>
    </conflict>
    <text>Truncated N-terminus.</text>
</comment>